<feature type="chain" id="PRO_0000069061" description="Alpha-1A adrenergic receptor">
    <location>
        <begin position="1"/>
        <end position="295" status="greater than"/>
    </location>
</feature>
<feature type="topological domain" description="Extracellular" evidence="1">
    <location>
        <begin position="1"/>
        <end position="27"/>
    </location>
</feature>
<feature type="transmembrane region" description="Helical; Name=1" evidence="1">
    <location>
        <begin position="28"/>
        <end position="51"/>
    </location>
</feature>
<feature type="topological domain" description="Cytoplasmic" evidence="1">
    <location>
        <begin position="52"/>
        <end position="64"/>
    </location>
</feature>
<feature type="transmembrane region" description="Helical; Name=2" evidence="1">
    <location>
        <begin position="65"/>
        <end position="88"/>
    </location>
</feature>
<feature type="topological domain" description="Extracellular" evidence="1">
    <location>
        <begin position="89"/>
        <end position="99"/>
    </location>
</feature>
<feature type="transmembrane region" description="Helical; Name=3" evidence="1">
    <location>
        <begin position="100"/>
        <end position="122"/>
    </location>
</feature>
<feature type="topological domain" description="Cytoplasmic" evidence="1">
    <location>
        <begin position="123"/>
        <end position="143"/>
    </location>
</feature>
<feature type="transmembrane region" description="Helical; Name=4" evidence="1">
    <location>
        <begin position="144"/>
        <end position="167"/>
    </location>
</feature>
<feature type="topological domain" description="Extracellular" evidence="1">
    <location>
        <begin position="168"/>
        <end position="181"/>
    </location>
</feature>
<feature type="transmembrane region" description="Helical; Name=5" evidence="1">
    <location>
        <begin position="182"/>
        <end position="205"/>
    </location>
</feature>
<feature type="topological domain" description="Cytoplasmic" evidence="1">
    <location>
        <begin position="206"/>
        <end position="273"/>
    </location>
</feature>
<feature type="transmembrane region" description="Helical; Name=6" evidence="1">
    <location>
        <begin position="274"/>
        <end position="295" status="greater than"/>
    </location>
</feature>
<feature type="modified residue" description="Phosphoserine; by PKA" evidence="3">
    <location>
        <position position="215"/>
    </location>
</feature>
<feature type="glycosylation site" description="N-linked (GlcNAc...) asparagine" evidence="3">
    <location>
        <position position="7"/>
    </location>
</feature>
<feature type="glycosylation site" description="N-linked (GlcNAc...) asparagine" evidence="3">
    <location>
        <position position="13"/>
    </location>
</feature>
<feature type="glycosylation site" description="N-linked (GlcNAc...) asparagine" evidence="3">
    <location>
        <position position="22"/>
    </location>
</feature>
<feature type="disulfide bond" evidence="4">
    <location>
        <begin position="99"/>
        <end position="176"/>
    </location>
</feature>
<feature type="non-terminal residue">
    <location>
        <position position="295"/>
    </location>
</feature>
<evidence type="ECO:0000250" key="1"/>
<evidence type="ECO:0000250" key="2">
    <source>
        <dbReference type="UniProtKB" id="P35348"/>
    </source>
</evidence>
<evidence type="ECO:0000255" key="3"/>
<evidence type="ECO:0000255" key="4">
    <source>
        <dbReference type="PROSITE-ProRule" id="PRU00521"/>
    </source>
</evidence>
<comment type="function">
    <text evidence="1">This alpha-adrenergic receptor mediates its action by association with G proteins that activate a phosphatidylinositol-calcium second messenger system. Its effect is mediated by G(q) and G(11) proteins. Nuclear ADRA1A-ADRA1B heterooligomers regulate phenylephrine (PE)-stimulated ERK signaling in cardiac myocytes (By similarity).</text>
</comment>
<comment type="subunit">
    <text evidence="2">Homo- and heterooligomer. Heterooligomerizes with ADRA1B homooligomers in cardiac myocytes. Interacts with CAVIN4.</text>
</comment>
<comment type="subcellular location">
    <subcellularLocation>
        <location>Nucleus membrane</location>
        <topology>Multi-pass membrane protein</topology>
    </subcellularLocation>
    <subcellularLocation>
        <location evidence="2">Cell membrane</location>
        <topology evidence="3">Multi-pass membrane protein</topology>
    </subcellularLocation>
    <subcellularLocation>
        <location evidence="2">Cytoplasm</location>
    </subcellularLocation>
    <subcellularLocation>
        <location evidence="2">Membrane</location>
        <location evidence="2">Caveola</location>
    </subcellularLocation>
    <text evidence="1">Location at the nuclear membrane facilitates heterooligomerization and regulates ERK-mediated signaling in cardiac myocytes. Colocalizes with GNAQ, PLCB1 as well as LAP2 at the nuclear membrane of cardiac myocytes (By similarity).</text>
</comment>
<comment type="similarity">
    <text evidence="4">Belongs to the G-protein coupled receptor 1 family. Adrenergic receptor subfamily. ADRA1A sub-subfamily.</text>
</comment>
<proteinExistence type="evidence at transcript level"/>
<accession>O77621</accession>
<sequence length="295" mass="32254">MVFLSGNASDSSNCTHPPAPVNISKAILLGVILGGLIIFGVLGNILVILSVACHRHLHSVTHYYIVNLAVADLLLTSTVLPFSAIFEILGYWAFGRVFCNIWAAVDVLCCTASIMGLCIISIDRYIGVSYPLRYPTIVTQKRGLMALLCVWALSLVISIGPLFGWRQPAPEDETICQITEEPGYVLFSALGSFYVPLTIILVMYCRVYVVAKRESRGLKSGLKTDKSDSEQVTLRIHRKNAPVGGTGVSSAKNKTHFSVRLLKFSREKKAAKTLGIVVGCFVLCWLPFFLVMPIG</sequence>
<name>ADA1A_CANLF</name>
<keyword id="KW-1003">Cell membrane</keyword>
<keyword id="KW-0963">Cytoplasm</keyword>
<keyword id="KW-1015">Disulfide bond</keyword>
<keyword id="KW-0297">G-protein coupled receptor</keyword>
<keyword id="KW-0325">Glycoprotein</keyword>
<keyword id="KW-0472">Membrane</keyword>
<keyword id="KW-0539">Nucleus</keyword>
<keyword id="KW-0597">Phosphoprotein</keyword>
<keyword id="KW-0675">Receptor</keyword>
<keyword id="KW-1185">Reference proteome</keyword>
<keyword id="KW-0807">Transducer</keyword>
<keyword id="KW-0812">Transmembrane</keyword>
<keyword id="KW-1133">Transmembrane helix</keyword>
<gene>
    <name type="primary">ADRA1A</name>
    <name type="synonym">ADRA1C</name>
</gene>
<protein>
    <recommendedName>
        <fullName>Alpha-1A adrenergic receptor</fullName>
    </recommendedName>
    <alternativeName>
        <fullName>Alpha-1A adrenoreceptor</fullName>
        <shortName>Alpha-1A adrenoceptor</shortName>
    </alternativeName>
    <alternativeName>
        <fullName>Alpha-1C adrenergic receptor</fullName>
    </alternativeName>
</protein>
<organism>
    <name type="scientific">Canis lupus familiaris</name>
    <name type="common">Dog</name>
    <name type="synonym">Canis familiaris</name>
    <dbReference type="NCBI Taxonomy" id="9615"/>
    <lineage>
        <taxon>Eukaryota</taxon>
        <taxon>Metazoa</taxon>
        <taxon>Chordata</taxon>
        <taxon>Craniata</taxon>
        <taxon>Vertebrata</taxon>
        <taxon>Euteleostomi</taxon>
        <taxon>Mammalia</taxon>
        <taxon>Eutheria</taxon>
        <taxon>Laurasiatheria</taxon>
        <taxon>Carnivora</taxon>
        <taxon>Caniformia</taxon>
        <taxon>Canidae</taxon>
        <taxon>Canis</taxon>
    </lineage>
</organism>
<dbReference type="EMBL" id="AF068283">
    <property type="protein sequence ID" value="AAC23861.1"/>
    <property type="molecule type" value="mRNA"/>
</dbReference>
<dbReference type="SMR" id="O77621"/>
<dbReference type="FunCoup" id="O77621">
    <property type="interactions" value="289"/>
</dbReference>
<dbReference type="STRING" id="9615.ENSCAFP00000060867"/>
<dbReference type="BindingDB" id="O77621"/>
<dbReference type="GlyCosmos" id="O77621">
    <property type="glycosylation" value="3 sites, No reported glycans"/>
</dbReference>
<dbReference type="PaxDb" id="9612-ENSCAFP00000012820"/>
<dbReference type="eggNOG" id="KOG3656">
    <property type="taxonomic scope" value="Eukaryota"/>
</dbReference>
<dbReference type="InParanoid" id="O77621"/>
<dbReference type="OrthoDB" id="6358729at2759"/>
<dbReference type="Proteomes" id="UP000002254">
    <property type="component" value="Unplaced"/>
</dbReference>
<dbReference type="Proteomes" id="UP000694429">
    <property type="component" value="Unplaced"/>
</dbReference>
<dbReference type="Proteomes" id="UP000694542">
    <property type="component" value="Unplaced"/>
</dbReference>
<dbReference type="Proteomes" id="UP000805418">
    <property type="component" value="Unplaced"/>
</dbReference>
<dbReference type="GO" id="GO:0005901">
    <property type="term" value="C:caveola"/>
    <property type="evidence" value="ECO:0007669"/>
    <property type="project" value="UniProtKB-SubCell"/>
</dbReference>
<dbReference type="GO" id="GO:0005737">
    <property type="term" value="C:cytoplasm"/>
    <property type="evidence" value="ECO:0000250"/>
    <property type="project" value="UniProtKB"/>
</dbReference>
<dbReference type="GO" id="GO:0031965">
    <property type="term" value="C:nuclear membrane"/>
    <property type="evidence" value="ECO:0000250"/>
    <property type="project" value="UniProtKB"/>
</dbReference>
<dbReference type="GO" id="GO:0005634">
    <property type="term" value="C:nucleus"/>
    <property type="evidence" value="ECO:0000250"/>
    <property type="project" value="UniProtKB"/>
</dbReference>
<dbReference type="GO" id="GO:0005886">
    <property type="term" value="C:plasma membrane"/>
    <property type="evidence" value="ECO:0000250"/>
    <property type="project" value="UniProtKB"/>
</dbReference>
<dbReference type="GO" id="GO:0004937">
    <property type="term" value="F:alpha1-adrenergic receptor activity"/>
    <property type="evidence" value="ECO:0000318"/>
    <property type="project" value="GO_Central"/>
</dbReference>
<dbReference type="GO" id="GO:0046982">
    <property type="term" value="F:protein heterodimerization activity"/>
    <property type="evidence" value="ECO:0000250"/>
    <property type="project" value="UniProtKB"/>
</dbReference>
<dbReference type="GO" id="GO:0071880">
    <property type="term" value="P:adenylate cyclase-activating adrenergic receptor signaling pathway"/>
    <property type="evidence" value="ECO:0000318"/>
    <property type="project" value="GO_Central"/>
</dbReference>
<dbReference type="GO" id="GO:0007267">
    <property type="term" value="P:cell-cell signaling"/>
    <property type="evidence" value="ECO:0000318"/>
    <property type="project" value="GO_Central"/>
</dbReference>
<dbReference type="GO" id="GO:0007200">
    <property type="term" value="P:phospholipase C-activating G protein-coupled receptor signaling pathway"/>
    <property type="evidence" value="ECO:0000318"/>
    <property type="project" value="GO_Central"/>
</dbReference>
<dbReference type="GO" id="GO:0007204">
    <property type="term" value="P:positive regulation of cytosolic calcium ion concentration"/>
    <property type="evidence" value="ECO:0000318"/>
    <property type="project" value="GO_Central"/>
</dbReference>
<dbReference type="GO" id="GO:0043410">
    <property type="term" value="P:positive regulation of MAPK cascade"/>
    <property type="evidence" value="ECO:0000250"/>
    <property type="project" value="UniProtKB"/>
</dbReference>
<dbReference type="GO" id="GO:0055117">
    <property type="term" value="P:regulation of cardiac muscle contraction"/>
    <property type="evidence" value="ECO:0007669"/>
    <property type="project" value="InterPro"/>
</dbReference>
<dbReference type="GO" id="GO:0019229">
    <property type="term" value="P:regulation of vasoconstriction"/>
    <property type="evidence" value="ECO:0007669"/>
    <property type="project" value="InterPro"/>
</dbReference>
<dbReference type="FunFam" id="1.20.1070.10:FF:000995">
    <property type="entry name" value="Adrenoceptor alpha 1D"/>
    <property type="match status" value="1"/>
</dbReference>
<dbReference type="Gene3D" id="1.20.1070.10">
    <property type="entry name" value="Rhodopsin 7-helix transmembrane proteins"/>
    <property type="match status" value="1"/>
</dbReference>
<dbReference type="InterPro" id="IPR002233">
    <property type="entry name" value="ADR_fam"/>
</dbReference>
<dbReference type="InterPro" id="IPR001004">
    <property type="entry name" value="ADRA1A_rcpt"/>
</dbReference>
<dbReference type="InterPro" id="IPR000276">
    <property type="entry name" value="GPCR_Rhodpsn"/>
</dbReference>
<dbReference type="InterPro" id="IPR017452">
    <property type="entry name" value="GPCR_Rhodpsn_7TM"/>
</dbReference>
<dbReference type="PANTHER" id="PTHR24248">
    <property type="entry name" value="ADRENERGIC RECEPTOR-RELATED G-PROTEIN COUPLED RECEPTOR"/>
    <property type="match status" value="1"/>
</dbReference>
<dbReference type="PANTHER" id="PTHR24248:SF16">
    <property type="entry name" value="ALPHA-1A ADRENERGIC RECEPTOR"/>
    <property type="match status" value="1"/>
</dbReference>
<dbReference type="Pfam" id="PF00001">
    <property type="entry name" value="7tm_1"/>
    <property type="match status" value="1"/>
</dbReference>
<dbReference type="PRINTS" id="PR01103">
    <property type="entry name" value="ADRENERGICR"/>
</dbReference>
<dbReference type="PRINTS" id="PR00557">
    <property type="entry name" value="ADRENRGCA1AR"/>
</dbReference>
<dbReference type="PRINTS" id="PR00237">
    <property type="entry name" value="GPCRRHODOPSN"/>
</dbReference>
<dbReference type="SMART" id="SM01381">
    <property type="entry name" value="7TM_GPCR_Srsx"/>
    <property type="match status" value="1"/>
</dbReference>
<dbReference type="SUPFAM" id="SSF81321">
    <property type="entry name" value="Family A G protein-coupled receptor-like"/>
    <property type="match status" value="1"/>
</dbReference>
<dbReference type="PROSITE" id="PS00237">
    <property type="entry name" value="G_PROTEIN_RECEP_F1_1"/>
    <property type="match status" value="1"/>
</dbReference>
<dbReference type="PROSITE" id="PS50262">
    <property type="entry name" value="G_PROTEIN_RECEP_F1_2"/>
    <property type="match status" value="1"/>
</dbReference>
<reference key="1">
    <citation type="journal article" date="2000" name="J. Pharmacol. Exp. Ther.">
        <title>An alpha(1A)/alpha(1L)-adrenoceptor mediates contraction of canine subcutaneous resistance arteries.</title>
        <authorList>
            <person name="Argyle S.A."/>
            <person name="McGrath J.C."/>
        </authorList>
    </citation>
    <scope>NUCLEOTIDE SEQUENCE [MRNA]</scope>
    <source>
        <tissue>Prostate</tissue>
    </source>
</reference>